<accession>Q6L3Z4</accession>
<sequence>MAQHGDGKQYMELDQSKGTEMRNKALMDNNMLLETFIQMSEKGRLSSNYMTVTAIVRDVEQESFAFASECGILDVSQKMLKNFKSLCAILRSIRPDASSNNAFAYWKEVICKWLCATLLSTRPDAGSDDGFAYWKEVIWKTKQEFRAKYPFPETPFAANKVDDVNTHSPKFVMEFIDAVVGNLNVLVKINDPSSLLFVPGPNEQTEQVLKELKLLRFFVCFVSNKCIEPQYRRTTFYTHALIEASHITMVVWLHFPIYGNGNQDLNPGDVSRLLSDFMEMKIKSIQLGISRNNIYIDVLKALKSTIPQAQNKHAAESGIEETPTHNLMVGLSDQMANLREMICLLRDNLIHLPILDLEFHVQDMDSVIVDAGLLFYSLYDIKGEKEDKTLEDINQALGFDIPRNIEPIKAMVYLVMQKAFQSNLPRIHGLGYVDFLLKNLKDFQGRYSDSLAFLKNQLQVIQTEFESLQPFLKVVVEEPHNRLKTLNEDCATQIIRKAYEVEYVVDACINKEVPQWCIERWLLDIIEEITCIKANIQEKNTVEDTMKTVIGRTSSQLTRTPRMNEEIVGFEDVIENLRKKLLNGTKGQDVISIHGMPGLGKTTLANRLYSDRSVVSQFDICAQCCVSQVYSYKELLLALLCDAVGEDSARRELPDNELADMFRKTLLPRRYLILVDDVWENSAWDDLRGCFPDVNNRSRIILTTRHHEVAKYASVHSDPLHLRMFGEDESWKLLEKKVFGEERCSPLLKNVGLRIAKMCGRLPLSIVLVAGILSEMEKEVECWEQVANNLGSHIHNDSRAIVDQSYHVLPFHLKSCFLYFGAFLEDRVINVSRLIRLWISESFIKSCEGRRLEDIAEGYLENLIGRNLVMVTQRANSDGKVKACRLHDVLLDFCKERAAEENFLLRIKWDQSTKPSSCVYSHKQHAHLAFTGMDNLLEWSTSGSLVGSVLFKNYDPNFAYNSCSSHAFAISRILPNFKFLKVLDLEHQFFIDFIPTELLYLRYLSARIGQNSIPSSISNLWNLETLILKDVRYMRRCRLLQPNTVWDMVKLRHLHIPYFSTEKEEALLENSAKLYDLETLSTPYFFRVENAELMLRKTPNLRKLICAIECLEYPPQYHVLNFPITLEILKLYRSSDFKVIPFCISAQNLKYLKLSGFYLNSQYLSETADHLKHLEVLKLHNIEFGGHSEWEVSNAKFPQLKILKLEYVSLMKLIVADDAFPNLEQLVLHDCEDLMEIPSCFMDILSLKYIEVDNCSESVVKSARNIQETQVEDSQNNNFKLVIVKKMVLKFDTSNEKEISKAFDRLLSLPGIQSIAVDSNEKKFIVIGDMDADEVRLVVGKLINRGML</sequence>
<organism>
    <name type="scientific">Solanum demissum</name>
    <name type="common">Wild potato</name>
    <dbReference type="NCBI Taxonomy" id="50514"/>
    <lineage>
        <taxon>Eukaryota</taxon>
        <taxon>Viridiplantae</taxon>
        <taxon>Streptophyta</taxon>
        <taxon>Embryophyta</taxon>
        <taxon>Tracheophyta</taxon>
        <taxon>Spermatophyta</taxon>
        <taxon>Magnoliopsida</taxon>
        <taxon>eudicotyledons</taxon>
        <taxon>Gunneridae</taxon>
        <taxon>Pentapetalae</taxon>
        <taxon>asterids</taxon>
        <taxon>lamiids</taxon>
        <taxon>Solanales</taxon>
        <taxon>Solanaceae</taxon>
        <taxon>Solanoideae</taxon>
        <taxon>Solaneae</taxon>
        <taxon>Solanum</taxon>
    </lineage>
</organism>
<evidence type="ECO:0000250" key="1"/>
<evidence type="ECO:0000255" key="2"/>
<evidence type="ECO:0000255" key="3">
    <source>
        <dbReference type="PROSITE-ProRule" id="PRU00280"/>
    </source>
</evidence>
<evidence type="ECO:0000305" key="4"/>
<feature type="chain" id="PRO_0000233966" description="Putative late blight resistance protein homolog R1B-12">
    <location>
        <begin position="1"/>
        <end position="1348"/>
    </location>
</feature>
<feature type="domain" description="NB-ARC">
    <location>
        <begin position="552"/>
        <end position="848"/>
    </location>
</feature>
<feature type="repeat" description="LRR 1">
    <location>
        <begin position="977"/>
        <end position="1001"/>
    </location>
</feature>
<feature type="repeat" description="LRR 2">
    <location>
        <begin position="1051"/>
        <end position="1074"/>
    </location>
</feature>
<feature type="repeat" description="LRR 3">
    <location>
        <begin position="1123"/>
        <end position="1147"/>
    </location>
</feature>
<feature type="repeat" description="LRR 4">
    <location>
        <begin position="1151"/>
        <end position="1170"/>
    </location>
</feature>
<feature type="repeat" description="LRR 5">
    <location>
        <begin position="1171"/>
        <end position="1194"/>
    </location>
</feature>
<feature type="repeat" description="LRR 6">
    <location>
        <begin position="1197"/>
        <end position="1219"/>
    </location>
</feature>
<feature type="repeat" description="LRR 7">
    <location>
        <begin position="1220"/>
        <end position="1244"/>
    </location>
</feature>
<feature type="domain" description="HMA" evidence="3">
    <location>
        <begin position="1284"/>
        <end position="1348"/>
    </location>
</feature>
<feature type="repeat" description="LRR 8">
    <location>
        <begin position="1309"/>
        <end position="1332"/>
    </location>
</feature>
<feature type="coiled-coil region" evidence="2">
    <location>
        <begin position="446"/>
        <end position="469"/>
    </location>
</feature>
<feature type="coiled-coil region" evidence="2">
    <location>
        <begin position="561"/>
        <end position="583"/>
    </location>
</feature>
<feature type="binding site" evidence="2">
    <location>
        <begin position="595"/>
        <end position="602"/>
    </location>
    <ligand>
        <name>ATP</name>
        <dbReference type="ChEBI" id="CHEBI:30616"/>
    </ligand>
</feature>
<comment type="function">
    <text>Confers resistance to late blight (Phytophthora infestans) races carrying the avirulence gene Avr1. Resistance proteins guard the plant against pathogens that contain an appropriate avirulence protein via an indirect interaction with this avirulence protein. That triggers a defense system including the hypersensitive response, which restricts the pathogen growth.</text>
</comment>
<comment type="subcellular location">
    <subcellularLocation>
        <location evidence="1">Cytoplasm</location>
    </subcellularLocation>
    <subcellularLocation>
        <location evidence="1">Membrane</location>
        <topology evidence="1">Peripheral membrane protein</topology>
    </subcellularLocation>
</comment>
<comment type="miscellaneous">
    <text>This protein is encoded by the haplotype B genome of the allohexaploid Solanum demissum.</text>
</comment>
<comment type="similarity">
    <text evidence="4">Belongs to the disease resistance NB-LRR family.</text>
</comment>
<reference key="1">
    <citation type="journal article" date="2005" name="Plant J.">
        <title>The R1 resistance gene cluster contains three groups of independently evolving, type I R1 homologues and shows substantial structural variation among haplotypes of Solanum demissum.</title>
        <authorList>
            <person name="Kuang H."/>
            <person name="Wei F."/>
            <person name="Marano M.R."/>
            <person name="Wirtz U."/>
            <person name="Wang X."/>
            <person name="Liu J."/>
            <person name="Shum W.P."/>
            <person name="Zaborsky J."/>
            <person name="Tallon L.J."/>
            <person name="Rensink W."/>
            <person name="Lobst S."/>
            <person name="Zhang P."/>
            <person name="Tornqvist C.-E."/>
            <person name="Tek A."/>
            <person name="Bamberg J."/>
            <person name="Helgeson J."/>
            <person name="Fry W."/>
            <person name="You F."/>
            <person name="Luo M.-C."/>
            <person name="Jiang J."/>
            <person name="Buell C.R."/>
            <person name="Baker B."/>
        </authorList>
    </citation>
    <scope>NUCLEOTIDE SEQUENCE [GENOMIC DNA]</scope>
</reference>
<protein>
    <recommendedName>
        <fullName>Putative late blight resistance protein homolog R1B-12</fullName>
    </recommendedName>
</protein>
<name>R1B12_SOLDE</name>
<gene>
    <name type="primary">R1B-12</name>
    <name type="ORF">PGEC872C13.3</name>
</gene>
<keyword id="KW-0067">ATP-binding</keyword>
<keyword id="KW-0175">Coiled coil</keyword>
<keyword id="KW-0963">Cytoplasm</keyword>
<keyword id="KW-0381">Hypersensitive response</keyword>
<keyword id="KW-0433">Leucine-rich repeat</keyword>
<keyword id="KW-0472">Membrane</keyword>
<keyword id="KW-0547">Nucleotide-binding</keyword>
<keyword id="KW-0611">Plant defense</keyword>
<keyword id="KW-0677">Repeat</keyword>
<proteinExistence type="inferred from homology"/>
<dbReference type="EMBL" id="AC149266">
    <property type="protein sequence ID" value="AAT38782.2"/>
    <property type="molecule type" value="Genomic_DNA"/>
</dbReference>
<dbReference type="SMR" id="Q6L3Z4"/>
<dbReference type="GO" id="GO:0005737">
    <property type="term" value="C:cytoplasm"/>
    <property type="evidence" value="ECO:0007669"/>
    <property type="project" value="UniProtKB-SubCell"/>
</dbReference>
<dbReference type="GO" id="GO:0016020">
    <property type="term" value="C:membrane"/>
    <property type="evidence" value="ECO:0007669"/>
    <property type="project" value="UniProtKB-SubCell"/>
</dbReference>
<dbReference type="GO" id="GO:0043531">
    <property type="term" value="F:ADP binding"/>
    <property type="evidence" value="ECO:0007669"/>
    <property type="project" value="InterPro"/>
</dbReference>
<dbReference type="GO" id="GO:0005524">
    <property type="term" value="F:ATP binding"/>
    <property type="evidence" value="ECO:0007669"/>
    <property type="project" value="UniProtKB-KW"/>
</dbReference>
<dbReference type="GO" id="GO:0046872">
    <property type="term" value="F:metal ion binding"/>
    <property type="evidence" value="ECO:0007669"/>
    <property type="project" value="InterPro"/>
</dbReference>
<dbReference type="GO" id="GO:0009626">
    <property type="term" value="P:plant-type hypersensitive response"/>
    <property type="evidence" value="ECO:0007669"/>
    <property type="project" value="UniProtKB-KW"/>
</dbReference>
<dbReference type="CDD" id="cd14798">
    <property type="entry name" value="RX-CC_like"/>
    <property type="match status" value="1"/>
</dbReference>
<dbReference type="FunFam" id="3.40.50.300:FF:001091">
    <property type="entry name" value="Probable disease resistance protein At1g61300"/>
    <property type="match status" value="1"/>
</dbReference>
<dbReference type="FunFam" id="1.10.10.10:FF:000322">
    <property type="entry name" value="Probable disease resistance protein At1g63360"/>
    <property type="match status" value="1"/>
</dbReference>
<dbReference type="Gene3D" id="3.30.70.100">
    <property type="match status" value="1"/>
</dbReference>
<dbReference type="Gene3D" id="1.10.8.430">
    <property type="entry name" value="Helical domain of apoptotic protease-activating factors"/>
    <property type="match status" value="1"/>
</dbReference>
<dbReference type="Gene3D" id="3.40.50.300">
    <property type="entry name" value="P-loop containing nucleotide triphosphate hydrolases"/>
    <property type="match status" value="1"/>
</dbReference>
<dbReference type="Gene3D" id="3.80.10.10">
    <property type="entry name" value="Ribonuclease Inhibitor"/>
    <property type="match status" value="2"/>
</dbReference>
<dbReference type="Gene3D" id="1.10.10.10">
    <property type="entry name" value="Winged helix-like DNA-binding domain superfamily/Winged helix DNA-binding domain"/>
    <property type="match status" value="1"/>
</dbReference>
<dbReference type="InterPro" id="IPR042197">
    <property type="entry name" value="Apaf_helical"/>
</dbReference>
<dbReference type="InterPro" id="IPR044974">
    <property type="entry name" value="Disease_R_plants"/>
</dbReference>
<dbReference type="InterPro" id="IPR006121">
    <property type="entry name" value="HMA_dom"/>
</dbReference>
<dbReference type="InterPro" id="IPR032675">
    <property type="entry name" value="LRR_dom_sf"/>
</dbReference>
<dbReference type="InterPro" id="IPR002182">
    <property type="entry name" value="NB-ARC"/>
</dbReference>
<dbReference type="InterPro" id="IPR027417">
    <property type="entry name" value="P-loop_NTPase"/>
</dbReference>
<dbReference type="InterPro" id="IPR021929">
    <property type="entry name" value="R1A-like_N"/>
</dbReference>
<dbReference type="InterPro" id="IPR038005">
    <property type="entry name" value="RX-like_CC"/>
</dbReference>
<dbReference type="InterPro" id="IPR036388">
    <property type="entry name" value="WH-like_DNA-bd_sf"/>
</dbReference>
<dbReference type="PANTHER" id="PTHR23155:SF1152">
    <property type="entry name" value="AAA+ ATPASE DOMAIN-CONTAINING PROTEIN"/>
    <property type="match status" value="1"/>
</dbReference>
<dbReference type="PANTHER" id="PTHR23155">
    <property type="entry name" value="DISEASE RESISTANCE PROTEIN RP"/>
    <property type="match status" value="1"/>
</dbReference>
<dbReference type="Pfam" id="PF00931">
    <property type="entry name" value="NB-ARC"/>
    <property type="match status" value="1"/>
</dbReference>
<dbReference type="Pfam" id="PF12061">
    <property type="entry name" value="NB-LRR"/>
    <property type="match status" value="1"/>
</dbReference>
<dbReference type="Pfam" id="PF23559">
    <property type="entry name" value="WH_DRP"/>
    <property type="match status" value="1"/>
</dbReference>
<dbReference type="PRINTS" id="PR00364">
    <property type="entry name" value="DISEASERSIST"/>
</dbReference>
<dbReference type="SUPFAM" id="SSF52058">
    <property type="entry name" value="L domain-like"/>
    <property type="match status" value="1"/>
</dbReference>
<dbReference type="SUPFAM" id="SSF52540">
    <property type="entry name" value="P-loop containing nucleoside triphosphate hydrolases"/>
    <property type="match status" value="1"/>
</dbReference>
<dbReference type="PROSITE" id="PS50846">
    <property type="entry name" value="HMA_2"/>
    <property type="match status" value="1"/>
</dbReference>